<dbReference type="EC" id="3.4.25.2" evidence="1"/>
<dbReference type="EMBL" id="CP000679">
    <property type="protein sequence ID" value="ABP66854.1"/>
    <property type="molecule type" value="Genomic_DNA"/>
</dbReference>
<dbReference type="RefSeq" id="WP_011916789.1">
    <property type="nucleotide sequence ID" value="NC_009437.1"/>
</dbReference>
<dbReference type="SMR" id="A4XIW9"/>
<dbReference type="STRING" id="351627.Csac_1251"/>
<dbReference type="MEROPS" id="T01.007"/>
<dbReference type="KEGG" id="csc:Csac_1251"/>
<dbReference type="eggNOG" id="COG5405">
    <property type="taxonomic scope" value="Bacteria"/>
</dbReference>
<dbReference type="HOGENOM" id="CLU_093872_1_1_9"/>
<dbReference type="OrthoDB" id="9804884at2"/>
<dbReference type="Proteomes" id="UP000000256">
    <property type="component" value="Chromosome"/>
</dbReference>
<dbReference type="GO" id="GO:0009376">
    <property type="term" value="C:HslUV protease complex"/>
    <property type="evidence" value="ECO:0007669"/>
    <property type="project" value="UniProtKB-UniRule"/>
</dbReference>
<dbReference type="GO" id="GO:0005839">
    <property type="term" value="C:proteasome core complex"/>
    <property type="evidence" value="ECO:0007669"/>
    <property type="project" value="InterPro"/>
</dbReference>
<dbReference type="GO" id="GO:0046872">
    <property type="term" value="F:metal ion binding"/>
    <property type="evidence" value="ECO:0007669"/>
    <property type="project" value="UniProtKB-KW"/>
</dbReference>
<dbReference type="GO" id="GO:0004298">
    <property type="term" value="F:threonine-type endopeptidase activity"/>
    <property type="evidence" value="ECO:0007669"/>
    <property type="project" value="UniProtKB-KW"/>
</dbReference>
<dbReference type="GO" id="GO:0051603">
    <property type="term" value="P:proteolysis involved in protein catabolic process"/>
    <property type="evidence" value="ECO:0007669"/>
    <property type="project" value="InterPro"/>
</dbReference>
<dbReference type="CDD" id="cd01913">
    <property type="entry name" value="protease_HslV"/>
    <property type="match status" value="1"/>
</dbReference>
<dbReference type="Gene3D" id="3.60.20.10">
    <property type="entry name" value="Glutamine Phosphoribosylpyrophosphate, subunit 1, domain 1"/>
    <property type="match status" value="1"/>
</dbReference>
<dbReference type="HAMAP" id="MF_00248">
    <property type="entry name" value="HslV"/>
    <property type="match status" value="1"/>
</dbReference>
<dbReference type="InterPro" id="IPR022281">
    <property type="entry name" value="ATP-dep_Prtase_HsIV_su"/>
</dbReference>
<dbReference type="InterPro" id="IPR029055">
    <property type="entry name" value="Ntn_hydrolases_N"/>
</dbReference>
<dbReference type="InterPro" id="IPR001353">
    <property type="entry name" value="Proteasome_sua/b"/>
</dbReference>
<dbReference type="InterPro" id="IPR023333">
    <property type="entry name" value="Proteasome_suB-type"/>
</dbReference>
<dbReference type="NCBIfam" id="TIGR03692">
    <property type="entry name" value="ATP_dep_HslV"/>
    <property type="match status" value="1"/>
</dbReference>
<dbReference type="NCBIfam" id="NF003964">
    <property type="entry name" value="PRK05456.1"/>
    <property type="match status" value="1"/>
</dbReference>
<dbReference type="PANTHER" id="PTHR32194:SF0">
    <property type="entry name" value="ATP-DEPENDENT PROTEASE SUBUNIT HSLV"/>
    <property type="match status" value="1"/>
</dbReference>
<dbReference type="PANTHER" id="PTHR32194">
    <property type="entry name" value="METALLOPROTEASE TLDD"/>
    <property type="match status" value="1"/>
</dbReference>
<dbReference type="Pfam" id="PF00227">
    <property type="entry name" value="Proteasome"/>
    <property type="match status" value="1"/>
</dbReference>
<dbReference type="PIRSF" id="PIRSF039093">
    <property type="entry name" value="HslV"/>
    <property type="match status" value="1"/>
</dbReference>
<dbReference type="SUPFAM" id="SSF56235">
    <property type="entry name" value="N-terminal nucleophile aminohydrolases (Ntn hydrolases)"/>
    <property type="match status" value="1"/>
</dbReference>
<dbReference type="PROSITE" id="PS51476">
    <property type="entry name" value="PROTEASOME_BETA_2"/>
    <property type="match status" value="1"/>
</dbReference>
<reference key="1">
    <citation type="submission" date="2007-04" db="EMBL/GenBank/DDBJ databases">
        <title>Genome sequence of the thermophilic hydrogen-producing bacterium Caldicellulosiruptor saccharolyticus DSM 8903.</title>
        <authorList>
            <person name="Copeland A."/>
            <person name="Lucas S."/>
            <person name="Lapidus A."/>
            <person name="Barry K."/>
            <person name="Detter J.C."/>
            <person name="Glavina del Rio T."/>
            <person name="Hammon N."/>
            <person name="Israni S."/>
            <person name="Dalin E."/>
            <person name="Tice H."/>
            <person name="Pitluck S."/>
            <person name="Kiss H."/>
            <person name="Brettin T."/>
            <person name="Bruce D."/>
            <person name="Han C."/>
            <person name="Schmutz J."/>
            <person name="Larimer F."/>
            <person name="Land M."/>
            <person name="Hauser L."/>
            <person name="Kyrpides N."/>
            <person name="Lykidis A."/>
            <person name="van de Werken H.J.G."/>
            <person name="Verhaart M.R.A."/>
            <person name="VanFossen A.L."/>
            <person name="Lewis D.L."/>
            <person name="Nichols J.D."/>
            <person name="Goorissen H.P."/>
            <person name="van Niel E.W.J."/>
            <person name="Stams F.J.M."/>
            <person name="Willquist K.U."/>
            <person name="Ward D.E."/>
            <person name="van der Oost J."/>
            <person name="Kelly R.M."/>
            <person name="Kengen S.M.W."/>
            <person name="Richardson P."/>
        </authorList>
    </citation>
    <scope>NUCLEOTIDE SEQUENCE [LARGE SCALE GENOMIC DNA]</scope>
    <source>
        <strain>ATCC 43494 / DSM 8903 / Tp8T 6331</strain>
    </source>
</reference>
<protein>
    <recommendedName>
        <fullName evidence="1">ATP-dependent protease subunit HslV</fullName>
        <ecNumber evidence="1">3.4.25.2</ecNumber>
    </recommendedName>
</protein>
<feature type="chain" id="PRO_0000336765" description="ATP-dependent protease subunit HslV">
    <location>
        <begin position="1"/>
        <end position="176"/>
    </location>
</feature>
<feature type="active site" evidence="1">
    <location>
        <position position="5"/>
    </location>
</feature>
<feature type="binding site" evidence="1">
    <location>
        <position position="161"/>
    </location>
    <ligand>
        <name>Na(+)</name>
        <dbReference type="ChEBI" id="CHEBI:29101"/>
    </ligand>
</feature>
<feature type="binding site" evidence="1">
    <location>
        <position position="164"/>
    </location>
    <ligand>
        <name>Na(+)</name>
        <dbReference type="ChEBI" id="CHEBI:29101"/>
    </ligand>
</feature>
<feature type="binding site" evidence="1">
    <location>
        <position position="167"/>
    </location>
    <ligand>
        <name>Na(+)</name>
        <dbReference type="ChEBI" id="CHEBI:29101"/>
    </ligand>
</feature>
<name>HSLV_CALS8</name>
<gene>
    <name evidence="1" type="primary">hslV</name>
    <name type="ordered locus">Csac_1251</name>
</gene>
<proteinExistence type="inferred from homology"/>
<evidence type="ECO:0000255" key="1">
    <source>
        <dbReference type="HAMAP-Rule" id="MF_00248"/>
    </source>
</evidence>
<keyword id="KW-0021">Allosteric enzyme</keyword>
<keyword id="KW-0963">Cytoplasm</keyword>
<keyword id="KW-0378">Hydrolase</keyword>
<keyword id="KW-0479">Metal-binding</keyword>
<keyword id="KW-0645">Protease</keyword>
<keyword id="KW-0915">Sodium</keyword>
<keyword id="KW-0888">Threonine protease</keyword>
<sequence>MFHATTIVAVKKGEKVAIAGDGQVTFSQNMIMKQNAKKVRKVYNGKVLVGFAGSVADAITLCEKFEEKLEQNSGNLQKSVVELAKEWRQDKILRRLEALMIVANSEHLFVVSGSGEVVEPDDNIAAIGSGGPYALAAARALVQNTNLEPAEIAKKALEIAASICIYTNNNITVLEL</sequence>
<comment type="function">
    <text evidence="1">Protease subunit of a proteasome-like degradation complex believed to be a general protein degrading machinery.</text>
</comment>
<comment type="catalytic activity">
    <reaction evidence="1">
        <text>ATP-dependent cleavage of peptide bonds with broad specificity.</text>
        <dbReference type="EC" id="3.4.25.2"/>
    </reaction>
</comment>
<comment type="activity regulation">
    <text evidence="1">Allosterically activated by HslU binding.</text>
</comment>
<comment type="subunit">
    <text evidence="1">A double ring-shaped homohexamer of HslV is capped on each side by a ring-shaped HslU homohexamer. The assembly of the HslU/HslV complex is dependent on binding of ATP.</text>
</comment>
<comment type="subcellular location">
    <subcellularLocation>
        <location evidence="1">Cytoplasm</location>
    </subcellularLocation>
</comment>
<comment type="similarity">
    <text evidence="1">Belongs to the peptidase T1B family. HslV subfamily.</text>
</comment>
<accession>A4XIW9</accession>
<organism>
    <name type="scientific">Caldicellulosiruptor saccharolyticus (strain ATCC 43494 / DSM 8903 / Tp8T 6331)</name>
    <dbReference type="NCBI Taxonomy" id="351627"/>
    <lineage>
        <taxon>Bacteria</taxon>
        <taxon>Bacillati</taxon>
        <taxon>Bacillota</taxon>
        <taxon>Bacillota incertae sedis</taxon>
        <taxon>Caldicellulosiruptorales</taxon>
        <taxon>Caldicellulosiruptoraceae</taxon>
        <taxon>Caldicellulosiruptor</taxon>
    </lineage>
</organism>